<proteinExistence type="inferred from homology"/>
<evidence type="ECO:0000255" key="1">
    <source>
        <dbReference type="HAMAP-Rule" id="MF_00338"/>
    </source>
</evidence>
<name>Y2656_BURTA</name>
<gene>
    <name type="ordered locus">BTH_I2656</name>
</gene>
<dbReference type="EMBL" id="CP000086">
    <property type="protein sequence ID" value="ABC37077.1"/>
    <property type="molecule type" value="Genomic_DNA"/>
</dbReference>
<dbReference type="RefSeq" id="WP_009891685.1">
    <property type="nucleotide sequence ID" value="NZ_CP008785.1"/>
</dbReference>
<dbReference type="SMR" id="Q2SV78"/>
<dbReference type="GeneID" id="45122361"/>
<dbReference type="KEGG" id="bte:BTH_I2656"/>
<dbReference type="HOGENOM" id="CLU_117144_1_1_4"/>
<dbReference type="Proteomes" id="UP000001930">
    <property type="component" value="Chromosome I"/>
</dbReference>
<dbReference type="Gene3D" id="3.30.110.70">
    <property type="entry name" value="Hypothetical protein apc22750. Chain B"/>
    <property type="match status" value="1"/>
</dbReference>
<dbReference type="HAMAP" id="MF_00338">
    <property type="entry name" value="UPF0145"/>
    <property type="match status" value="1"/>
</dbReference>
<dbReference type="InterPro" id="IPR035439">
    <property type="entry name" value="UPF0145_dom_sf"/>
</dbReference>
<dbReference type="InterPro" id="IPR002765">
    <property type="entry name" value="UPF0145_YbjQ-like"/>
</dbReference>
<dbReference type="PANTHER" id="PTHR34068:SF2">
    <property type="entry name" value="UPF0145 PROTEIN SCO3412"/>
    <property type="match status" value="1"/>
</dbReference>
<dbReference type="PANTHER" id="PTHR34068">
    <property type="entry name" value="UPF0145 PROTEIN YBJQ"/>
    <property type="match status" value="1"/>
</dbReference>
<dbReference type="Pfam" id="PF01906">
    <property type="entry name" value="YbjQ_1"/>
    <property type="match status" value="1"/>
</dbReference>
<dbReference type="SUPFAM" id="SSF117782">
    <property type="entry name" value="YbjQ-like"/>
    <property type="match status" value="1"/>
</dbReference>
<protein>
    <recommendedName>
        <fullName evidence="1">UPF0145 protein BTH_I2656</fullName>
    </recommendedName>
</protein>
<accession>Q2SV78</accession>
<organism>
    <name type="scientific">Burkholderia thailandensis (strain ATCC 700388 / DSM 13276 / CCUG 48851 / CIP 106301 / E264)</name>
    <dbReference type="NCBI Taxonomy" id="271848"/>
    <lineage>
        <taxon>Bacteria</taxon>
        <taxon>Pseudomonadati</taxon>
        <taxon>Pseudomonadota</taxon>
        <taxon>Betaproteobacteria</taxon>
        <taxon>Burkholderiales</taxon>
        <taxon>Burkholderiaceae</taxon>
        <taxon>Burkholderia</taxon>
        <taxon>pseudomallei group</taxon>
    </lineage>
</organism>
<sequence>MADPQLITTAFDLPGYRIERSLGVARGIVVRSRSIVGTFGASIQTLFGGNISLYTSLCERARQDAYERMIEEARQMGGNAIVGMRYDATEIASGVTEVLCYGTAVQAVRAG</sequence>
<comment type="similarity">
    <text evidence="1">Belongs to the UPF0145 family.</text>
</comment>
<reference key="1">
    <citation type="journal article" date="2005" name="BMC Genomics">
        <title>Bacterial genome adaptation to niches: divergence of the potential virulence genes in three Burkholderia species of different survival strategies.</title>
        <authorList>
            <person name="Kim H.S."/>
            <person name="Schell M.A."/>
            <person name="Yu Y."/>
            <person name="Ulrich R.L."/>
            <person name="Sarria S.H."/>
            <person name="Nierman W.C."/>
            <person name="DeShazer D."/>
        </authorList>
    </citation>
    <scope>NUCLEOTIDE SEQUENCE [LARGE SCALE GENOMIC DNA]</scope>
    <source>
        <strain>ATCC 700388 / DSM 13276 / CCUG 48851 / CIP 106301 / E264</strain>
    </source>
</reference>
<feature type="chain" id="PRO_1000012984" description="UPF0145 protein BTH_I2656">
    <location>
        <begin position="1"/>
        <end position="111"/>
    </location>
</feature>